<evidence type="ECO:0000250" key="1"/>
<evidence type="ECO:0000250" key="2">
    <source>
        <dbReference type="UniProtKB" id="Q9H816"/>
    </source>
</evidence>
<evidence type="ECO:0000256" key="3">
    <source>
        <dbReference type="SAM" id="MobiDB-lite"/>
    </source>
</evidence>
<evidence type="ECO:0000305" key="4"/>
<name>DCR1B_DANRE</name>
<protein>
    <recommendedName>
        <fullName>5' exonuclease Apollo</fullName>
        <ecNumber>3.1.-.-</ecNumber>
    </recommendedName>
    <alternativeName>
        <fullName>Beta-lactamase MBLAC2</fullName>
        <ecNumber evidence="2">3.5.2.6</ecNumber>
    </alternativeName>
    <alternativeName>
        <fullName>DNA cross-link repair 1B protein</fullName>
    </alternativeName>
    <alternativeName>
        <fullName>SNM1 homolog B</fullName>
    </alternativeName>
</protein>
<accession>B0V2S2</accession>
<accession>Q08BA3</accession>
<reference key="1">
    <citation type="journal article" date="2013" name="Nature">
        <title>The zebrafish reference genome sequence and its relationship to the human genome.</title>
        <authorList>
            <person name="Howe K."/>
            <person name="Clark M.D."/>
            <person name="Torroja C.F."/>
            <person name="Torrance J."/>
            <person name="Berthelot C."/>
            <person name="Muffato M."/>
            <person name="Collins J.E."/>
            <person name="Humphray S."/>
            <person name="McLaren K."/>
            <person name="Matthews L."/>
            <person name="McLaren S."/>
            <person name="Sealy I."/>
            <person name="Caccamo M."/>
            <person name="Churcher C."/>
            <person name="Scott C."/>
            <person name="Barrett J.C."/>
            <person name="Koch R."/>
            <person name="Rauch G.J."/>
            <person name="White S."/>
            <person name="Chow W."/>
            <person name="Kilian B."/>
            <person name="Quintais L.T."/>
            <person name="Guerra-Assuncao J.A."/>
            <person name="Zhou Y."/>
            <person name="Gu Y."/>
            <person name="Yen J."/>
            <person name="Vogel J.H."/>
            <person name="Eyre T."/>
            <person name="Redmond S."/>
            <person name="Banerjee R."/>
            <person name="Chi J."/>
            <person name="Fu B."/>
            <person name="Langley E."/>
            <person name="Maguire S.F."/>
            <person name="Laird G.K."/>
            <person name="Lloyd D."/>
            <person name="Kenyon E."/>
            <person name="Donaldson S."/>
            <person name="Sehra H."/>
            <person name="Almeida-King J."/>
            <person name="Loveland J."/>
            <person name="Trevanion S."/>
            <person name="Jones M."/>
            <person name="Quail M."/>
            <person name="Willey D."/>
            <person name="Hunt A."/>
            <person name="Burton J."/>
            <person name="Sims S."/>
            <person name="McLay K."/>
            <person name="Plumb B."/>
            <person name="Davis J."/>
            <person name="Clee C."/>
            <person name="Oliver K."/>
            <person name="Clark R."/>
            <person name="Riddle C."/>
            <person name="Elliot D."/>
            <person name="Threadgold G."/>
            <person name="Harden G."/>
            <person name="Ware D."/>
            <person name="Begum S."/>
            <person name="Mortimore B."/>
            <person name="Kerry G."/>
            <person name="Heath P."/>
            <person name="Phillimore B."/>
            <person name="Tracey A."/>
            <person name="Corby N."/>
            <person name="Dunn M."/>
            <person name="Johnson C."/>
            <person name="Wood J."/>
            <person name="Clark S."/>
            <person name="Pelan S."/>
            <person name="Griffiths G."/>
            <person name="Smith M."/>
            <person name="Glithero R."/>
            <person name="Howden P."/>
            <person name="Barker N."/>
            <person name="Lloyd C."/>
            <person name="Stevens C."/>
            <person name="Harley J."/>
            <person name="Holt K."/>
            <person name="Panagiotidis G."/>
            <person name="Lovell J."/>
            <person name="Beasley H."/>
            <person name="Henderson C."/>
            <person name="Gordon D."/>
            <person name="Auger K."/>
            <person name="Wright D."/>
            <person name="Collins J."/>
            <person name="Raisen C."/>
            <person name="Dyer L."/>
            <person name="Leung K."/>
            <person name="Robertson L."/>
            <person name="Ambridge K."/>
            <person name="Leongamornlert D."/>
            <person name="McGuire S."/>
            <person name="Gilderthorp R."/>
            <person name="Griffiths C."/>
            <person name="Manthravadi D."/>
            <person name="Nichol S."/>
            <person name="Barker G."/>
            <person name="Whitehead S."/>
            <person name="Kay M."/>
            <person name="Brown J."/>
            <person name="Murnane C."/>
            <person name="Gray E."/>
            <person name="Humphries M."/>
            <person name="Sycamore N."/>
            <person name="Barker D."/>
            <person name="Saunders D."/>
            <person name="Wallis J."/>
            <person name="Babbage A."/>
            <person name="Hammond S."/>
            <person name="Mashreghi-Mohammadi M."/>
            <person name="Barr L."/>
            <person name="Martin S."/>
            <person name="Wray P."/>
            <person name="Ellington A."/>
            <person name="Matthews N."/>
            <person name="Ellwood M."/>
            <person name="Woodmansey R."/>
            <person name="Clark G."/>
            <person name="Cooper J."/>
            <person name="Tromans A."/>
            <person name="Grafham D."/>
            <person name="Skuce C."/>
            <person name="Pandian R."/>
            <person name="Andrews R."/>
            <person name="Harrison E."/>
            <person name="Kimberley A."/>
            <person name="Garnett J."/>
            <person name="Fosker N."/>
            <person name="Hall R."/>
            <person name="Garner P."/>
            <person name="Kelly D."/>
            <person name="Bird C."/>
            <person name="Palmer S."/>
            <person name="Gehring I."/>
            <person name="Berger A."/>
            <person name="Dooley C.M."/>
            <person name="Ersan-Urun Z."/>
            <person name="Eser C."/>
            <person name="Geiger H."/>
            <person name="Geisler M."/>
            <person name="Karotki L."/>
            <person name="Kirn A."/>
            <person name="Konantz J."/>
            <person name="Konantz M."/>
            <person name="Oberlander M."/>
            <person name="Rudolph-Geiger S."/>
            <person name="Teucke M."/>
            <person name="Lanz C."/>
            <person name="Raddatz G."/>
            <person name="Osoegawa K."/>
            <person name="Zhu B."/>
            <person name="Rapp A."/>
            <person name="Widaa S."/>
            <person name="Langford C."/>
            <person name="Yang F."/>
            <person name="Schuster S.C."/>
            <person name="Carter N.P."/>
            <person name="Harrow J."/>
            <person name="Ning Z."/>
            <person name="Herrero J."/>
            <person name="Searle S.M."/>
            <person name="Enright A."/>
            <person name="Geisler R."/>
            <person name="Plasterk R.H."/>
            <person name="Lee C."/>
            <person name="Westerfield M."/>
            <person name="de Jong P.J."/>
            <person name="Zon L.I."/>
            <person name="Postlethwait J.H."/>
            <person name="Nusslein-Volhard C."/>
            <person name="Hubbard T.J."/>
            <person name="Roest Crollius H."/>
            <person name="Rogers J."/>
            <person name="Stemple D.L."/>
        </authorList>
    </citation>
    <scope>NUCLEOTIDE SEQUENCE [LARGE SCALE GENOMIC DNA]</scope>
    <source>
        <strain>Tuebingen</strain>
    </source>
</reference>
<reference key="2">
    <citation type="submission" date="2006-10" db="EMBL/GenBank/DDBJ databases">
        <authorList>
            <consortium name="NIH - Zebrafish Gene Collection (ZGC) project"/>
        </authorList>
    </citation>
    <scope>NUCLEOTIDE SEQUENCE [LARGE SCALE MRNA]</scope>
</reference>
<dbReference type="EC" id="3.1.-.-"/>
<dbReference type="EC" id="3.5.2.6" evidence="2"/>
<dbReference type="EMBL" id="CT025875">
    <property type="protein sequence ID" value="CAQ15298.1"/>
    <property type="molecule type" value="Genomic_DNA"/>
</dbReference>
<dbReference type="EMBL" id="BC124809">
    <property type="protein sequence ID" value="AAI24810.1"/>
    <property type="molecule type" value="mRNA"/>
</dbReference>
<dbReference type="RefSeq" id="NP_001070751.1">
    <property type="nucleotide sequence ID" value="NM_001077283.1"/>
</dbReference>
<dbReference type="SMR" id="B0V2S2"/>
<dbReference type="FunCoup" id="B0V2S2">
    <property type="interactions" value="79"/>
</dbReference>
<dbReference type="STRING" id="7955.ENSDARP00000090466"/>
<dbReference type="PaxDb" id="7955-ENSDARP00000090466"/>
<dbReference type="Ensembl" id="ENSDART00000099692">
    <property type="protein sequence ID" value="ENSDARP00000090466"/>
    <property type="gene ID" value="ENSDARG00000068833"/>
</dbReference>
<dbReference type="Ensembl" id="ENSDART00000186211">
    <property type="protein sequence ID" value="ENSDARP00000149606"/>
    <property type="gene ID" value="ENSDARG00000068833"/>
</dbReference>
<dbReference type="GeneID" id="768137"/>
<dbReference type="KEGG" id="dre:768137"/>
<dbReference type="AGR" id="ZFIN:ZDB-GENE-061013-328"/>
<dbReference type="CTD" id="64858"/>
<dbReference type="ZFIN" id="ZDB-GENE-061013-328">
    <property type="gene designation" value="dclre1b"/>
</dbReference>
<dbReference type="eggNOG" id="KOG1361">
    <property type="taxonomic scope" value="Eukaryota"/>
</dbReference>
<dbReference type="HOGENOM" id="CLU_034741_0_0_1"/>
<dbReference type="InParanoid" id="B0V2S2"/>
<dbReference type="OMA" id="NQRAWMG"/>
<dbReference type="OrthoDB" id="262529at2759"/>
<dbReference type="PhylomeDB" id="B0V2S2"/>
<dbReference type="TreeFam" id="TF329572"/>
<dbReference type="PRO" id="PR:B0V2S2"/>
<dbReference type="Proteomes" id="UP000000437">
    <property type="component" value="Chromosome 8"/>
</dbReference>
<dbReference type="Bgee" id="ENSDARG00000068833">
    <property type="expression patterns" value="Expressed in mature ovarian follicle and 28 other cell types or tissues"/>
</dbReference>
<dbReference type="GO" id="GO:0005813">
    <property type="term" value="C:centrosome"/>
    <property type="evidence" value="ECO:0000250"/>
    <property type="project" value="UniProtKB"/>
</dbReference>
<dbReference type="GO" id="GO:0000781">
    <property type="term" value="C:chromosome, telomeric region"/>
    <property type="evidence" value="ECO:0000250"/>
    <property type="project" value="UniProtKB"/>
</dbReference>
<dbReference type="GO" id="GO:0005634">
    <property type="term" value="C:nucleus"/>
    <property type="evidence" value="ECO:0007669"/>
    <property type="project" value="UniProtKB-SubCell"/>
</dbReference>
<dbReference type="GO" id="GO:0035312">
    <property type="term" value="F:5'-3' DNA exonuclease activity"/>
    <property type="evidence" value="ECO:0000318"/>
    <property type="project" value="GO_Central"/>
</dbReference>
<dbReference type="GO" id="GO:0008409">
    <property type="term" value="F:5'-3' exonuclease activity"/>
    <property type="evidence" value="ECO:0000250"/>
    <property type="project" value="UniProtKB"/>
</dbReference>
<dbReference type="GO" id="GO:0008800">
    <property type="term" value="F:beta-lactamase activity"/>
    <property type="evidence" value="ECO:0000250"/>
    <property type="project" value="UniProtKB"/>
</dbReference>
<dbReference type="GO" id="GO:0003684">
    <property type="term" value="F:damaged DNA binding"/>
    <property type="evidence" value="ECO:0000318"/>
    <property type="project" value="GO_Central"/>
</dbReference>
<dbReference type="GO" id="GO:0006303">
    <property type="term" value="P:double-strand break repair via nonhomologous end joining"/>
    <property type="evidence" value="ECO:0000318"/>
    <property type="project" value="GO_Central"/>
</dbReference>
<dbReference type="GO" id="GO:0036297">
    <property type="term" value="P:interstrand cross-link repair"/>
    <property type="evidence" value="ECO:0000318"/>
    <property type="project" value="GO_Central"/>
</dbReference>
<dbReference type="GO" id="GO:0031848">
    <property type="term" value="P:protection from non-homologous end joining at telomere"/>
    <property type="evidence" value="ECO:0000250"/>
    <property type="project" value="UniProtKB"/>
</dbReference>
<dbReference type="GO" id="GO:0000723">
    <property type="term" value="P:telomere maintenance"/>
    <property type="evidence" value="ECO:0000250"/>
    <property type="project" value="UniProtKB"/>
</dbReference>
<dbReference type="GO" id="GO:0031860">
    <property type="term" value="P:telomeric 3' overhang formation"/>
    <property type="evidence" value="ECO:0000250"/>
    <property type="project" value="UniProtKB"/>
</dbReference>
<dbReference type="GO" id="GO:0031627">
    <property type="term" value="P:telomeric loop formation"/>
    <property type="evidence" value="ECO:0000250"/>
    <property type="project" value="UniProtKB"/>
</dbReference>
<dbReference type="CDD" id="cd16273">
    <property type="entry name" value="SNM1A-1C-like_MBL-fold"/>
    <property type="match status" value="1"/>
</dbReference>
<dbReference type="FunFam" id="3.40.50.12650:FF:000003">
    <property type="entry name" value="DNA cross-link repair 1B"/>
    <property type="match status" value="1"/>
</dbReference>
<dbReference type="Gene3D" id="3.40.50.12650">
    <property type="match status" value="1"/>
</dbReference>
<dbReference type="Gene3D" id="3.60.15.10">
    <property type="entry name" value="Ribonuclease Z/Hydroxyacylglutathione hydrolase-like"/>
    <property type="match status" value="1"/>
</dbReference>
<dbReference type="InterPro" id="IPR011084">
    <property type="entry name" value="DRMBL"/>
</dbReference>
<dbReference type="InterPro" id="IPR036866">
    <property type="entry name" value="RibonucZ/Hydroxyglut_hydro"/>
</dbReference>
<dbReference type="PANTHER" id="PTHR23240:SF26">
    <property type="entry name" value="5' EXONUCLEASE APOLLO"/>
    <property type="match status" value="1"/>
</dbReference>
<dbReference type="PANTHER" id="PTHR23240">
    <property type="entry name" value="DNA CROSS-LINK REPAIR PROTEIN PSO2/SNM1-RELATED"/>
    <property type="match status" value="1"/>
</dbReference>
<dbReference type="Pfam" id="PF07522">
    <property type="entry name" value="DRMBL"/>
    <property type="match status" value="1"/>
</dbReference>
<dbReference type="SUPFAM" id="SSF56281">
    <property type="entry name" value="Metallo-hydrolase/oxidoreductase"/>
    <property type="match status" value="1"/>
</dbReference>
<proteinExistence type="evidence at transcript level"/>
<comment type="function">
    <text evidence="2">5'-3' exonuclease that plays a central role in telomere maintenance and protection during S-phase. Participates in the protection of telomeres against non-homologous end-joining (NHEJ)-mediated repair, thereby ensuring that telomeres do not fuse. Plays a key role in telomeric loop (T loop) formation by being recruited by terf2 at the leading end telomeres and by processing leading-end telomeres immediately after their replication via its exonuclease activity: generates 3' single-stranded overhang at the leading end telomeres avoiding blunt leading-end telomeres that are vulnerable to end-joining reactions and expose the telomere end in a manner that activates the DNA repair pathways (By similarity). Possesses beta-lactamase activity, catalyzing the hydrolysis of penicillin G and nitrocefin (By similarity). Exhibits no activity towards other beta-lactam antibiotic classes including cephalosporins (cefotaxime) and carbapenems (imipenem) (By similarity).</text>
</comment>
<comment type="catalytic activity">
    <reaction evidence="2">
        <text>a beta-lactam + H2O = a substituted beta-amino acid</text>
        <dbReference type="Rhea" id="RHEA:20401"/>
        <dbReference type="ChEBI" id="CHEBI:15377"/>
        <dbReference type="ChEBI" id="CHEBI:35627"/>
        <dbReference type="ChEBI" id="CHEBI:140347"/>
        <dbReference type="EC" id="3.5.2.6"/>
    </reaction>
</comment>
<comment type="subunit">
    <text evidence="1">Interacts with terf2; the interaction is direct.</text>
</comment>
<comment type="subcellular location">
    <subcellularLocation>
        <location evidence="1">Chromosome</location>
        <location evidence="1">Telomere</location>
    </subcellularLocation>
    <subcellularLocation>
        <location evidence="1">Nucleus</location>
    </subcellularLocation>
</comment>
<comment type="domain">
    <text evidence="1">The TBM domain mediates interaction with terf2.</text>
</comment>
<comment type="similarity">
    <text evidence="4">Belongs to the DNA repair metallo-beta-lactamase (DRMBL) family.</text>
</comment>
<sequence>MNGKVLPDTPIAVDCWQLRKCLHVRLFFLSHMHSDHTCGLSSTWSHRPIYCSPLTAKLLRLKLQIKQKWIRPLEIGQDHMLMLDDLGKERLTVNLIDANHCPGAVMFLFQGYFGTRLYTGDFRYTPSMLRVPCLQNHINIDVLYLDNTNCDPTRALPSRQQATQQIKQIIRDHPGYAVVIGLYSLGKESLLVDLAMEFKTWVEVDRERLETLRVLQLPDVFTTDSGAGRIRVVNQSMISASNLMAWNKLQSTIAILPTSRPMVSCHPNVYVVPYSDHSSYQELEDFVSALSPISLVPIVGNCLPYFSSLLSPRKKPKAVVIPESVKQYMMTNSNIRSSTNGMIQRTSRPEVRGVVFDSPETKLSQPNHDDMDSNDTEIDHDTTDRNSDSDCILLDMGTNSYHRDNDQGNKRLKLIRIESEDVVTVTSSLTMDDNESVSTRKGIGSPDPSLIYECDHESPTKSSKEKSPEMGSTNSGEMCSSMDSMHDQTSLTTAAALTLPNPQSVTSAIPITLESEQFEHWLLENFTIPAEELKEGQVLRGLCENYRLNPVDLPKPVGDPLEAAIKRLMSN</sequence>
<keyword id="KW-0158">Chromosome</keyword>
<keyword id="KW-0227">DNA damage</keyword>
<keyword id="KW-0234">DNA repair</keyword>
<keyword id="KW-0269">Exonuclease</keyword>
<keyword id="KW-0378">Hydrolase</keyword>
<keyword id="KW-0540">Nuclease</keyword>
<keyword id="KW-0539">Nucleus</keyword>
<keyword id="KW-1185">Reference proteome</keyword>
<keyword id="KW-0779">Telomere</keyword>
<organism>
    <name type="scientific">Danio rerio</name>
    <name type="common">Zebrafish</name>
    <name type="synonym">Brachydanio rerio</name>
    <dbReference type="NCBI Taxonomy" id="7955"/>
    <lineage>
        <taxon>Eukaryota</taxon>
        <taxon>Metazoa</taxon>
        <taxon>Chordata</taxon>
        <taxon>Craniata</taxon>
        <taxon>Vertebrata</taxon>
        <taxon>Euteleostomi</taxon>
        <taxon>Actinopterygii</taxon>
        <taxon>Neopterygii</taxon>
        <taxon>Teleostei</taxon>
        <taxon>Ostariophysi</taxon>
        <taxon>Cypriniformes</taxon>
        <taxon>Danionidae</taxon>
        <taxon>Danioninae</taxon>
        <taxon>Danio</taxon>
    </lineage>
</organism>
<gene>
    <name type="primary">dclre1b</name>
    <name type="synonym">snm1b</name>
    <name type="ORF">si:dkey-73i4.1</name>
    <name type="ORF">zgc:154089</name>
</gene>
<feature type="chain" id="PRO_0000398627" description="5' exonuclease Apollo">
    <location>
        <begin position="1"/>
        <end position="571"/>
    </location>
</feature>
<feature type="region of interest" description="Disordered" evidence="3">
    <location>
        <begin position="346"/>
        <end position="386"/>
    </location>
</feature>
<feature type="region of interest" description="Disordered" evidence="3">
    <location>
        <begin position="431"/>
        <end position="487"/>
    </location>
</feature>
<feature type="short sequence motif" description="TBM">
    <location>
        <begin position="501"/>
        <end position="532"/>
    </location>
</feature>
<feature type="compositionally biased region" description="Basic and acidic residues" evidence="3">
    <location>
        <begin position="367"/>
        <end position="386"/>
    </location>
</feature>
<feature type="compositionally biased region" description="Basic and acidic residues" evidence="3">
    <location>
        <begin position="453"/>
        <end position="468"/>
    </location>
</feature>
<feature type="compositionally biased region" description="Polar residues" evidence="3">
    <location>
        <begin position="470"/>
        <end position="487"/>
    </location>
</feature>
<feature type="sequence conflict" description="In Ref. 2; AAI24810." evidence="4" ref="2">
    <original>Q</original>
    <variation>L</variation>
    <location>
        <position position="165"/>
    </location>
</feature>
<feature type="sequence conflict" description="In Ref. 2; AAI24810." evidence="4" ref="2">
    <original>S</original>
    <variation>N</variation>
    <location>
        <position position="239"/>
    </location>
</feature>
<feature type="sequence conflict" description="In Ref. 2; AAI24810." evidence="4" ref="2">
    <original>K</original>
    <variation>R</variation>
    <location>
        <position position="314"/>
    </location>
</feature>
<feature type="sequence conflict" description="In Ref. 2; AAI24810." evidence="4" ref="2">
    <original>R</original>
    <variation>Q</variation>
    <location>
        <position position="336"/>
    </location>
</feature>
<feature type="sequence conflict" description="In Ref. 2; AAI24810." evidence="4" ref="2">
    <original>T</original>
    <variation>A</variation>
    <location>
        <position position="339"/>
    </location>
</feature>
<feature type="sequence conflict" description="In Ref. 2; AAI24810." evidence="4" ref="2">
    <original>G</original>
    <variation>R</variation>
    <location>
        <position position="408"/>
    </location>
</feature>
<feature type="sequence conflict" description="In Ref. 2; AAI24810." evidence="4" ref="2">
    <original>I</original>
    <variation>M</variation>
    <location>
        <position position="415"/>
    </location>
</feature>
<feature type="sequence conflict" description="In Ref. 2; AAI24810." evidence="4" ref="2">
    <original>Q</original>
    <variation>H</variation>
    <location>
        <position position="517"/>
    </location>
</feature>